<organism>
    <name type="scientific">Arabidopsis thaliana</name>
    <name type="common">Mouse-ear cress</name>
    <dbReference type="NCBI Taxonomy" id="3702"/>
    <lineage>
        <taxon>Eukaryota</taxon>
        <taxon>Viridiplantae</taxon>
        <taxon>Streptophyta</taxon>
        <taxon>Embryophyta</taxon>
        <taxon>Tracheophyta</taxon>
        <taxon>Spermatophyta</taxon>
        <taxon>Magnoliopsida</taxon>
        <taxon>eudicotyledons</taxon>
        <taxon>Gunneridae</taxon>
        <taxon>Pentapetalae</taxon>
        <taxon>rosids</taxon>
        <taxon>malvids</taxon>
        <taxon>Brassicales</taxon>
        <taxon>Brassicaceae</taxon>
        <taxon>Camelineae</taxon>
        <taxon>Arabidopsis</taxon>
    </lineage>
</organism>
<keyword id="KW-0472">Membrane</keyword>
<keyword id="KW-0479">Metal-binding</keyword>
<keyword id="KW-1185">Reference proteome</keyword>
<keyword id="KW-0808">Transferase</keyword>
<keyword id="KW-0812">Transmembrane</keyword>
<keyword id="KW-1133">Transmembrane helix</keyword>
<keyword id="KW-0833">Ubl conjugation pathway</keyword>
<keyword id="KW-0862">Zinc</keyword>
<keyword id="KW-0863">Zinc-finger</keyword>
<accession>Q9LY41</accession>
<accession>Q4TU21</accession>
<accession>Q9SPV6</accession>
<accession>Q9ZT40</accession>
<gene>
    <name evidence="7" type="primary">ATL4</name>
    <name evidence="8" type="synonym">RHX1A</name>
    <name type="ordered locus">At3g60220</name>
    <name type="ORF">F27H5_10</name>
</gene>
<proteinExistence type="evidence at protein level"/>
<name>ATL4_ARATH</name>
<reference key="1">
    <citation type="journal article" date="1999" name="Plant Mol. Biol.">
        <title>Early elicitor induction in members of a novel multigene family coding for highly related RING-H2 proteins in Arabidopsis thaliana.</title>
        <authorList>
            <person name="Salinas-Mondragon R.E."/>
            <person name="Garciduenas-Pina C."/>
            <person name="Guzman P."/>
        </authorList>
    </citation>
    <scope>NUCLEOTIDE SEQUENCE [MRNA]</scope>
</reference>
<reference key="2">
    <citation type="journal article" date="2005" name="Plant Physiol.">
        <title>Functional analysis of the RING-type ubiquitin ligase family of Arabidopsis.</title>
        <authorList>
            <person name="Stone S.L."/>
            <person name="Hauksdottir H."/>
            <person name="Troy A."/>
            <person name="Herschleb J."/>
            <person name="Kraft E."/>
            <person name="Callis J."/>
        </authorList>
    </citation>
    <scope>NUCLEOTIDE SEQUENCE [MRNA]</scope>
    <scope>FUNCTION</scope>
    <scope>CATALYTIC ACTIVITY</scope>
    <source>
        <strain>cv. Columbia</strain>
        <tissue>Leaf</tissue>
    </source>
</reference>
<reference key="3">
    <citation type="journal article" date="2000" name="Nature">
        <title>Sequence and analysis of chromosome 3 of the plant Arabidopsis thaliana.</title>
        <authorList>
            <person name="Salanoubat M."/>
            <person name="Lemcke K."/>
            <person name="Rieger M."/>
            <person name="Ansorge W."/>
            <person name="Unseld M."/>
            <person name="Fartmann B."/>
            <person name="Valle G."/>
            <person name="Bloecker H."/>
            <person name="Perez-Alonso M."/>
            <person name="Obermaier B."/>
            <person name="Delseny M."/>
            <person name="Boutry M."/>
            <person name="Grivell L.A."/>
            <person name="Mache R."/>
            <person name="Puigdomenech P."/>
            <person name="De Simone V."/>
            <person name="Choisne N."/>
            <person name="Artiguenave F."/>
            <person name="Robert C."/>
            <person name="Brottier P."/>
            <person name="Wincker P."/>
            <person name="Cattolico L."/>
            <person name="Weissenbach J."/>
            <person name="Saurin W."/>
            <person name="Quetier F."/>
            <person name="Schaefer M."/>
            <person name="Mueller-Auer S."/>
            <person name="Gabel C."/>
            <person name="Fuchs M."/>
            <person name="Benes V."/>
            <person name="Wurmbach E."/>
            <person name="Drzonek H."/>
            <person name="Erfle H."/>
            <person name="Jordan N."/>
            <person name="Bangert S."/>
            <person name="Wiedelmann R."/>
            <person name="Kranz H."/>
            <person name="Voss H."/>
            <person name="Holland R."/>
            <person name="Brandt P."/>
            <person name="Nyakatura G."/>
            <person name="Vezzi A."/>
            <person name="D'Angelo M."/>
            <person name="Pallavicini A."/>
            <person name="Toppo S."/>
            <person name="Simionati B."/>
            <person name="Conrad A."/>
            <person name="Hornischer K."/>
            <person name="Kauer G."/>
            <person name="Loehnert T.-H."/>
            <person name="Nordsiek G."/>
            <person name="Reichelt J."/>
            <person name="Scharfe M."/>
            <person name="Schoen O."/>
            <person name="Bargues M."/>
            <person name="Terol J."/>
            <person name="Climent J."/>
            <person name="Navarro P."/>
            <person name="Collado C."/>
            <person name="Perez-Perez A."/>
            <person name="Ottenwaelder B."/>
            <person name="Duchemin D."/>
            <person name="Cooke R."/>
            <person name="Laudie M."/>
            <person name="Berger-Llauro C."/>
            <person name="Purnelle B."/>
            <person name="Masuy D."/>
            <person name="de Haan M."/>
            <person name="Maarse A.C."/>
            <person name="Alcaraz J.-P."/>
            <person name="Cottet A."/>
            <person name="Casacuberta E."/>
            <person name="Monfort A."/>
            <person name="Argiriou A."/>
            <person name="Flores M."/>
            <person name="Liguori R."/>
            <person name="Vitale D."/>
            <person name="Mannhaupt G."/>
            <person name="Haase D."/>
            <person name="Schoof H."/>
            <person name="Rudd S."/>
            <person name="Zaccaria P."/>
            <person name="Mewes H.-W."/>
            <person name="Mayer K.F.X."/>
            <person name="Kaul S."/>
            <person name="Town C.D."/>
            <person name="Koo H.L."/>
            <person name="Tallon L.J."/>
            <person name="Jenkins J."/>
            <person name="Rooney T."/>
            <person name="Rizzo M."/>
            <person name="Walts A."/>
            <person name="Utterback T."/>
            <person name="Fujii C.Y."/>
            <person name="Shea T.P."/>
            <person name="Creasy T.H."/>
            <person name="Haas B."/>
            <person name="Maiti R."/>
            <person name="Wu D."/>
            <person name="Peterson J."/>
            <person name="Van Aken S."/>
            <person name="Pai G."/>
            <person name="Militscher J."/>
            <person name="Sellers P."/>
            <person name="Gill J.E."/>
            <person name="Feldblyum T.V."/>
            <person name="Preuss D."/>
            <person name="Lin X."/>
            <person name="Nierman W.C."/>
            <person name="Salzberg S.L."/>
            <person name="White O."/>
            <person name="Venter J.C."/>
            <person name="Fraser C.M."/>
            <person name="Kaneko T."/>
            <person name="Nakamura Y."/>
            <person name="Sato S."/>
            <person name="Kato T."/>
            <person name="Asamizu E."/>
            <person name="Sasamoto S."/>
            <person name="Kimura T."/>
            <person name="Idesawa K."/>
            <person name="Kawashima K."/>
            <person name="Kishida Y."/>
            <person name="Kiyokawa C."/>
            <person name="Kohara M."/>
            <person name="Matsumoto M."/>
            <person name="Matsuno A."/>
            <person name="Muraki A."/>
            <person name="Nakayama S."/>
            <person name="Nakazaki N."/>
            <person name="Shinpo S."/>
            <person name="Takeuchi C."/>
            <person name="Wada T."/>
            <person name="Watanabe A."/>
            <person name="Yamada M."/>
            <person name="Yasuda M."/>
            <person name="Tabata S."/>
        </authorList>
    </citation>
    <scope>NUCLEOTIDE SEQUENCE [LARGE SCALE GENOMIC DNA]</scope>
    <source>
        <strain>cv. Columbia</strain>
    </source>
</reference>
<reference key="4">
    <citation type="journal article" date="2017" name="Plant J.">
        <title>Araport11: a complete reannotation of the Arabidopsis thaliana reference genome.</title>
        <authorList>
            <person name="Cheng C.Y."/>
            <person name="Krishnakumar V."/>
            <person name="Chan A.P."/>
            <person name="Thibaud-Nissen F."/>
            <person name="Schobel S."/>
            <person name="Town C.D."/>
        </authorList>
    </citation>
    <scope>GENOME REANNOTATION</scope>
    <source>
        <strain>cv. Columbia</strain>
    </source>
</reference>
<reference key="5">
    <citation type="submission" date="2006-08" db="EMBL/GenBank/DDBJ databases">
        <title>Arabidopsis ORF clones.</title>
        <authorList>
            <person name="Quinitio C."/>
            <person name="Chen H."/>
            <person name="Kim C.J."/>
            <person name="Shinn P."/>
            <person name="Ecker J.R."/>
        </authorList>
    </citation>
    <scope>NUCLEOTIDE SEQUENCE [LARGE SCALE MRNA]</scope>
    <source>
        <strain>cv. Columbia</strain>
    </source>
</reference>
<reference key="6">
    <citation type="journal article" date="1998" name="FEBS Lett.">
        <title>Widespread occurrence of a highly conserved RING-H2 zinc finger motif in the model plant Arabidopsis thaliana.</title>
        <authorList>
            <person name="Jensen R.B."/>
            <person name="Jensen K.L."/>
            <person name="Jespersen H.M."/>
            <person name="Skriver K."/>
        </authorList>
    </citation>
    <scope>NUCLEOTIDE SEQUENCE [MRNA] OF 62-334</scope>
    <source>
        <strain>cv. Columbia</strain>
    </source>
</reference>
<reference key="7">
    <citation type="journal article" date="2002" name="Genome Biol.">
        <title>Evaluation and classification of RING-finger domains encoded by the Arabidopsis genome.</title>
        <authorList>
            <person name="Kosarev P."/>
            <person name="Mayer K.F.X."/>
            <person name="Hardtke C.S."/>
        </authorList>
    </citation>
    <scope>GENE FAMILY ORGANIZATION</scope>
</reference>
<reference key="8">
    <citation type="journal article" date="2006" name="J. Mol. Evol.">
        <title>The ATL gene family from Arabidopsis thaliana and Oryza sativa comprises a large number of putative ubiquitin ligases of the RING-H2 type.</title>
        <authorList>
            <person name="Serrano M."/>
            <person name="Parra S."/>
            <person name="Alcaraz L.D."/>
            <person name="Guzman P."/>
        </authorList>
    </citation>
    <scope>NOMENCLATURE</scope>
    <scope>GENE FAMILY ORGANIZATION</scope>
</reference>
<evidence type="ECO:0000250" key="1"/>
<evidence type="ECO:0000255" key="2"/>
<evidence type="ECO:0000255" key="3">
    <source>
        <dbReference type="PROSITE-ProRule" id="PRU00175"/>
    </source>
</evidence>
<evidence type="ECO:0000256" key="4">
    <source>
        <dbReference type="SAM" id="MobiDB-lite"/>
    </source>
</evidence>
<evidence type="ECO:0000269" key="5">
    <source>
    </source>
</evidence>
<evidence type="ECO:0000303" key="6">
    <source>
    </source>
</evidence>
<evidence type="ECO:0000303" key="7">
    <source>
    </source>
</evidence>
<evidence type="ECO:0000303" key="8">
    <source>
    </source>
</evidence>
<evidence type="ECO:0000305" key="9"/>
<comment type="function">
    <text evidence="5">E3 ubiquitin-protein ligase able to catalyze polyubiquitination with ubiquitin-conjugating enzyme E2 UBC8 in vitro.</text>
</comment>
<comment type="catalytic activity">
    <reaction evidence="5">
        <text>S-ubiquitinyl-[E2 ubiquitin-conjugating enzyme]-L-cysteine + [acceptor protein]-L-lysine = [E2 ubiquitin-conjugating enzyme]-L-cysteine + N(6)-ubiquitinyl-[acceptor protein]-L-lysine.</text>
        <dbReference type="EC" id="2.3.2.27"/>
    </reaction>
</comment>
<comment type="pathway">
    <text>Protein modification; protein ubiquitination.</text>
</comment>
<comment type="subcellular location">
    <subcellularLocation>
        <location evidence="9">Membrane</location>
        <topology evidence="9">Single-pass membrane protein</topology>
    </subcellularLocation>
</comment>
<comment type="domain">
    <text evidence="1">The RING-type zinc finger domain mediates binding to an E2 ubiquitin-conjugating enzyme.</text>
</comment>
<comment type="similarity">
    <text evidence="9">Belongs to the RING-type zinc finger family. ATL subfamily.</text>
</comment>
<comment type="sequence caution" evidence="9">
    <conflict type="frameshift">
        <sequence resource="EMBL-CDS" id="AAD33582"/>
    </conflict>
</comment>
<dbReference type="EC" id="2.3.2.27" evidence="5"/>
<dbReference type="EMBL" id="AF132014">
    <property type="protein sequence ID" value="AAD33582.1"/>
    <property type="status" value="ALT_FRAME"/>
    <property type="molecule type" value="mRNA"/>
</dbReference>
<dbReference type="EMBL" id="DQ059115">
    <property type="protein sequence ID" value="AAY57601.1"/>
    <property type="molecule type" value="mRNA"/>
</dbReference>
<dbReference type="EMBL" id="AL163852">
    <property type="protein sequence ID" value="CAB87859.1"/>
    <property type="molecule type" value="Genomic_DNA"/>
</dbReference>
<dbReference type="EMBL" id="CP002686">
    <property type="protein sequence ID" value="AEE80025.1"/>
    <property type="molecule type" value="Genomic_DNA"/>
</dbReference>
<dbReference type="EMBL" id="BT028933">
    <property type="protein sequence ID" value="ABI49480.1"/>
    <property type="molecule type" value="mRNA"/>
</dbReference>
<dbReference type="EMBL" id="AF079184">
    <property type="protein sequence ID" value="AAC69858.1"/>
    <property type="molecule type" value="mRNA"/>
</dbReference>
<dbReference type="PIR" id="T49217">
    <property type="entry name" value="T49217"/>
</dbReference>
<dbReference type="PIR" id="T51855">
    <property type="entry name" value="T51855"/>
</dbReference>
<dbReference type="PIR" id="T52407">
    <property type="entry name" value="T52407"/>
</dbReference>
<dbReference type="RefSeq" id="NP_191581.1">
    <property type="nucleotide sequence ID" value="NM_115885.3"/>
</dbReference>
<dbReference type="SMR" id="Q9LY41"/>
<dbReference type="BioGRID" id="10506">
    <property type="interactions" value="5"/>
</dbReference>
<dbReference type="FunCoup" id="Q9LY41">
    <property type="interactions" value="1"/>
</dbReference>
<dbReference type="IntAct" id="Q9LY41">
    <property type="interactions" value="5"/>
</dbReference>
<dbReference type="STRING" id="3702.Q9LY41"/>
<dbReference type="iPTMnet" id="Q9LY41"/>
<dbReference type="PaxDb" id="3702-AT3G60220.1"/>
<dbReference type="ProteomicsDB" id="246570"/>
<dbReference type="EnsemblPlants" id="AT3G60220.1">
    <property type="protein sequence ID" value="AT3G60220.1"/>
    <property type="gene ID" value="AT3G60220"/>
</dbReference>
<dbReference type="GeneID" id="825192"/>
<dbReference type="Gramene" id="AT3G60220.1">
    <property type="protein sequence ID" value="AT3G60220.1"/>
    <property type="gene ID" value="AT3G60220"/>
</dbReference>
<dbReference type="KEGG" id="ath:AT3G60220"/>
<dbReference type="Araport" id="AT3G60220"/>
<dbReference type="TAIR" id="AT3G60220">
    <property type="gene designation" value="ATL4"/>
</dbReference>
<dbReference type="eggNOG" id="KOG0800">
    <property type="taxonomic scope" value="Eukaryota"/>
</dbReference>
<dbReference type="HOGENOM" id="CLU_060203_0_0_1"/>
<dbReference type="InParanoid" id="Q9LY41"/>
<dbReference type="OMA" id="TWLQSNQ"/>
<dbReference type="OrthoDB" id="8062037at2759"/>
<dbReference type="PhylomeDB" id="Q9LY41"/>
<dbReference type="UniPathway" id="UPA00143"/>
<dbReference type="PRO" id="PR:Q9LY41"/>
<dbReference type="Proteomes" id="UP000006548">
    <property type="component" value="Chromosome 3"/>
</dbReference>
<dbReference type="ExpressionAtlas" id="Q9LY41">
    <property type="expression patterns" value="baseline and differential"/>
</dbReference>
<dbReference type="GO" id="GO:0016020">
    <property type="term" value="C:membrane"/>
    <property type="evidence" value="ECO:0007669"/>
    <property type="project" value="UniProtKB-SubCell"/>
</dbReference>
<dbReference type="GO" id="GO:0004842">
    <property type="term" value="F:ubiquitin-protein transferase activity"/>
    <property type="evidence" value="ECO:0000314"/>
    <property type="project" value="UniProtKB"/>
</dbReference>
<dbReference type="GO" id="GO:0008270">
    <property type="term" value="F:zinc ion binding"/>
    <property type="evidence" value="ECO:0007669"/>
    <property type="project" value="UniProtKB-KW"/>
</dbReference>
<dbReference type="GO" id="GO:0016567">
    <property type="term" value="P:protein ubiquitination"/>
    <property type="evidence" value="ECO:0000314"/>
    <property type="project" value="UniProtKB"/>
</dbReference>
<dbReference type="CDD" id="cd16461">
    <property type="entry name" value="RING-H2_EL5-like"/>
    <property type="match status" value="1"/>
</dbReference>
<dbReference type="FunFam" id="3.30.40.10:FF:000366">
    <property type="entry name" value="E3 ubiquitin-protein ligase ATL4"/>
    <property type="match status" value="1"/>
</dbReference>
<dbReference type="Gene3D" id="3.30.40.10">
    <property type="entry name" value="Zinc/RING finger domain, C3HC4 (zinc finger)"/>
    <property type="match status" value="1"/>
</dbReference>
<dbReference type="InterPro" id="IPR001841">
    <property type="entry name" value="Znf_RING"/>
</dbReference>
<dbReference type="InterPro" id="IPR013083">
    <property type="entry name" value="Znf_RING/FYVE/PHD"/>
</dbReference>
<dbReference type="PANTHER" id="PTHR45768:SF16">
    <property type="entry name" value="E3 UBIQUITIN-PROTEIN LIGASE ATL4"/>
    <property type="match status" value="1"/>
</dbReference>
<dbReference type="PANTHER" id="PTHR45768">
    <property type="entry name" value="E3 UBIQUITIN-PROTEIN LIGASE RNF13-LIKE"/>
    <property type="match status" value="1"/>
</dbReference>
<dbReference type="Pfam" id="PF13639">
    <property type="entry name" value="zf-RING_2"/>
    <property type="match status" value="1"/>
</dbReference>
<dbReference type="SMART" id="SM00184">
    <property type="entry name" value="RING"/>
    <property type="match status" value="1"/>
</dbReference>
<dbReference type="SUPFAM" id="SSF57850">
    <property type="entry name" value="RING/U-box"/>
    <property type="match status" value="1"/>
</dbReference>
<dbReference type="PROSITE" id="PS50089">
    <property type="entry name" value="ZF_RING_2"/>
    <property type="match status" value="1"/>
</dbReference>
<sequence length="334" mass="36562">MESLINPSHGGGNYDSHSSSLDSLKPSVLVIILILLMTLLISVSICFLLRCLNRCSHRSVLPLSSSSSVATVTSDSRRFSGHRVSPETERSSVLDSLPIFKFSSVTRRSSSMNSGDCAVCLSKFEPEDQLRLLPLCCHAFHADCIDIWLVSNQTCPLCRSPLFASESDLMKSLAVVGSNNGGGENSFRLEIGSISRRRQTPIPESVEQHRTYSIGSFDYIVDDVDSEISESNFNRGKQEDATTTTATATAVTTNPTSFEASLAADIGNDGSRSWLKDYVDRLSRGISSRAMSFRSSGRFFTGSSRRSEELTVMDLEANHAGEEISELFRWLSGV</sequence>
<protein>
    <recommendedName>
        <fullName evidence="9">E3 ubiquitin-protein ligase ATL4</fullName>
        <ecNumber evidence="5">2.3.2.27</ecNumber>
    </recommendedName>
    <alternativeName>
        <fullName evidence="6">Protein ARABIDOPSIS TOXICOS EN LEVADURA 4</fullName>
        <shortName evidence="6">Protein ATL4</shortName>
    </alternativeName>
    <alternativeName>
        <fullName evidence="8">RING-H2 finger X1a</fullName>
    </alternativeName>
    <alternativeName>
        <fullName evidence="9">RING-H2 zinc finger protein ATL4</fullName>
    </alternativeName>
    <alternativeName>
        <fullName evidence="9">RING-H2 zinc finger protein RHX1a</fullName>
    </alternativeName>
    <alternativeName>
        <fullName evidence="9">RING-type E3 ubiquitin transferase ATL4</fullName>
    </alternativeName>
</protein>
<feature type="chain" id="PRO_0000055795" description="E3 ubiquitin-protein ligase ATL4">
    <location>
        <begin position="1"/>
        <end position="334"/>
    </location>
</feature>
<feature type="transmembrane region" description="Helical" evidence="2">
    <location>
        <begin position="28"/>
        <end position="48"/>
    </location>
</feature>
<feature type="zinc finger region" description="RING-type; atypical" evidence="3">
    <location>
        <begin position="117"/>
        <end position="159"/>
    </location>
</feature>
<feature type="region of interest" description="Disordered" evidence="4">
    <location>
        <begin position="1"/>
        <end position="20"/>
    </location>
</feature>
<feature type="sequence conflict" description="In Ref. 1; AAD33582." evidence="9" ref="1">
    <original>P</original>
    <variation>S</variation>
    <location>
        <position position="126"/>
    </location>
</feature>